<dbReference type="EC" id="1.14.14.103" evidence="4 7"/>
<dbReference type="EMBL" id="FJ647194">
    <property type="protein sequence ID" value="ACM92061.1"/>
    <property type="molecule type" value="mRNA"/>
</dbReference>
<dbReference type="EMBL" id="AJ238612">
    <property type="protein sequence ID" value="CAB56503.1"/>
    <property type="molecule type" value="mRNA"/>
</dbReference>
<dbReference type="SMR" id="P98183"/>
<dbReference type="KEGG" id="ag:CAB56503"/>
<dbReference type="OrthoDB" id="2789670at2759"/>
<dbReference type="BioCyc" id="MetaCyc:MONOMER-7709"/>
<dbReference type="BRENDA" id="1.14.14.103">
    <property type="organism ID" value="1211"/>
</dbReference>
<dbReference type="SABIO-RK" id="P98183"/>
<dbReference type="UniPathway" id="UPA00365"/>
<dbReference type="GO" id="GO:0005789">
    <property type="term" value="C:endoplasmic reticulum membrane"/>
    <property type="evidence" value="ECO:0007669"/>
    <property type="project" value="UniProtKB-SubCell"/>
</dbReference>
<dbReference type="GO" id="GO:0020037">
    <property type="term" value="F:heme binding"/>
    <property type="evidence" value="ECO:0007669"/>
    <property type="project" value="InterPro"/>
</dbReference>
<dbReference type="GO" id="GO:0005506">
    <property type="term" value="F:iron ion binding"/>
    <property type="evidence" value="ECO:0007669"/>
    <property type="project" value="InterPro"/>
</dbReference>
<dbReference type="GO" id="GO:0050594">
    <property type="term" value="F:tabersonine 16-hydroxylase activity"/>
    <property type="evidence" value="ECO:0007669"/>
    <property type="project" value="UniProtKB-EC"/>
</dbReference>
<dbReference type="GO" id="GO:0009820">
    <property type="term" value="P:alkaloid metabolic process"/>
    <property type="evidence" value="ECO:0007669"/>
    <property type="project" value="UniProtKB-KW"/>
</dbReference>
<dbReference type="CDD" id="cd11072">
    <property type="entry name" value="CYP71-like"/>
    <property type="match status" value="1"/>
</dbReference>
<dbReference type="FunFam" id="1.10.630.10:FF:000043">
    <property type="entry name" value="Cytochrome P450 99A2"/>
    <property type="match status" value="1"/>
</dbReference>
<dbReference type="Gene3D" id="1.10.630.10">
    <property type="entry name" value="Cytochrome P450"/>
    <property type="match status" value="1"/>
</dbReference>
<dbReference type="InterPro" id="IPR052306">
    <property type="entry name" value="CYP450_71D"/>
</dbReference>
<dbReference type="InterPro" id="IPR001128">
    <property type="entry name" value="Cyt_P450"/>
</dbReference>
<dbReference type="InterPro" id="IPR017972">
    <property type="entry name" value="Cyt_P450_CS"/>
</dbReference>
<dbReference type="InterPro" id="IPR002401">
    <property type="entry name" value="Cyt_P450_E_grp-I"/>
</dbReference>
<dbReference type="InterPro" id="IPR036396">
    <property type="entry name" value="Cyt_P450_sf"/>
</dbReference>
<dbReference type="PANTHER" id="PTHR47953:SF19">
    <property type="entry name" value="OS06G0641600 PROTEIN"/>
    <property type="match status" value="1"/>
</dbReference>
<dbReference type="PANTHER" id="PTHR47953">
    <property type="entry name" value="OS08G0105600 PROTEIN"/>
    <property type="match status" value="1"/>
</dbReference>
<dbReference type="Pfam" id="PF00067">
    <property type="entry name" value="p450"/>
    <property type="match status" value="1"/>
</dbReference>
<dbReference type="PRINTS" id="PR00463">
    <property type="entry name" value="EP450I"/>
</dbReference>
<dbReference type="PRINTS" id="PR00385">
    <property type="entry name" value="P450"/>
</dbReference>
<dbReference type="SUPFAM" id="SSF48264">
    <property type="entry name" value="Cytochrome P450"/>
    <property type="match status" value="1"/>
</dbReference>
<dbReference type="PROSITE" id="PS00086">
    <property type="entry name" value="CYTOCHROME_P450"/>
    <property type="match status" value="1"/>
</dbReference>
<accession>P98183</accession>
<accession>C0KYN4</accession>
<feature type="chain" id="PRO_0000310728" description="Tabersonine 16-hydroxylase 1">
    <location>
        <begin position="1"/>
        <end position="506"/>
    </location>
</feature>
<feature type="transmembrane region" description="Helical" evidence="2">
    <location>
        <begin position="1"/>
        <end position="21"/>
    </location>
</feature>
<feature type="binding site" description="axial binding residue" evidence="1">
    <location>
        <position position="447"/>
    </location>
    <ligand>
        <name>heme</name>
        <dbReference type="ChEBI" id="CHEBI:30413"/>
    </ligand>
    <ligandPart>
        <name>Fe</name>
        <dbReference type="ChEBI" id="CHEBI:18248"/>
    </ligandPart>
</feature>
<reference key="1">
    <citation type="journal article" date="2011" name="J. Plant Physiol.">
        <title>Spatial organization of the vindoline biosynthetic pathway in Catharanthus roseus.</title>
        <authorList>
            <person name="Guirimand G."/>
            <person name="Guihur A."/>
            <person name="Poutrain P."/>
            <person name="Hericourt F."/>
            <person name="Mahroug S."/>
            <person name="St-Pierre B."/>
            <person name="Burlat V."/>
            <person name="Courdavault V."/>
        </authorList>
    </citation>
    <scope>NUCLEOTIDE SEQUENCE [MRNA]</scope>
    <scope>SUBCELLULAR LOCATION</scope>
</reference>
<reference key="2">
    <citation type="journal article" date="1999" name="FEBS Lett.">
        <title>Light-induced cytochrome P450-dependent enzyme in indole alkaloid biosynthesis: tabersonine 16-hydroxylase.</title>
        <authorList>
            <person name="Schroeder G."/>
            <person name="Unterbusch E."/>
            <person name="Kaltenbach M."/>
            <person name="Schmidt J."/>
            <person name="Strack D."/>
            <person name="Schroeder J."/>
        </authorList>
    </citation>
    <scope>NUCLEOTIDE SEQUENCE [MRNA] OF 12-506</scope>
    <scope>FUNCTION</scope>
</reference>
<reference key="3">
    <citation type="journal article" date="1995" name="Plant Physiol.">
        <title>A cytochrome P-450 monooxygenase catalyzes the first step in the conversion of tabersonine to vindoline in Catharanthus roseus.</title>
        <authorList>
            <person name="St Pierre B."/>
            <person name="De Luca V."/>
        </authorList>
    </citation>
    <scope>FUNCTION</scope>
    <scope>CATALYTIC ACTIVITY</scope>
    <scope>BIOPHYSICOCHEMICAL PROPERTIES</scope>
    <scope>SUBCELLULAR LOCATION</scope>
    <scope>TISSUE SPECIFICITY</scope>
    <scope>DEVELOPMENTAL STAGE</scope>
    <scope>INDUCTION</scope>
</reference>
<reference key="4">
    <citation type="journal article" date="2005" name="Plant J.">
        <title>Localization of tabersonine 16-hydroxylase and 16-OH tabersonine-16-O-methyltransferase to leaf epidermal cells defines them as a major site of precursor biosynthesis in the vindoline pathway in Catharanthus roseus.</title>
        <authorList>
            <person name="Murata J."/>
            <person name="De Luca V."/>
        </authorList>
    </citation>
    <scope>TISSUE SPECIFICITY</scope>
</reference>
<reference key="5">
    <citation type="journal article" date="2013" name="Plant Physiol.">
        <title>A pair of tabersonine 16-hydroxylases initiates the synthesis of vindoline in an organ-dependent manner in Catharanthus roseus.</title>
        <authorList>
            <person name="Besseau S."/>
            <person name="Kellner F."/>
            <person name="Lanoue A."/>
            <person name="Thamm A.M."/>
            <person name="Salim V."/>
            <person name="Schneider B."/>
            <person name="Geu-Flores F."/>
            <person name="Hoefer R."/>
            <person name="Guirimand G."/>
            <person name="Guihur A."/>
            <person name="Oudin A."/>
            <person name="Glevarec G."/>
            <person name="Foureau E."/>
            <person name="Papon N."/>
            <person name="Clastre M."/>
            <person name="Giglioli-Guivarc'h N."/>
            <person name="St-Pierre B."/>
            <person name="Werck-Reichhart D."/>
            <person name="Burlat V."/>
            <person name="De Luca V."/>
            <person name="O'Connor S.E."/>
            <person name="Courdavault V."/>
        </authorList>
    </citation>
    <scope>FUNCTION</scope>
    <scope>CATALYTIC ACTIVITY</scope>
    <scope>BIOPHYSICOCHEMICAL PROPERTIES</scope>
    <scope>SUBSTRATE SPECIFICITY</scope>
    <scope>INDUCTION BY METHYL JASMONATE</scope>
</reference>
<gene>
    <name evidence="8" type="primary">CYP71D12</name>
    <name evidence="8" type="synonym">T16H1</name>
</gene>
<comment type="function">
    <text evidence="3 4 7">Involved in the flower biosynthesis of vindoline, a precursor of vinblastine and vincristine (PubMed:10481044, PubMed:12228585, PubMed:24108213). Hydroxylates specifically tabersonine, 2,3-dihydrotabersonine and 2,3-dihydro-3-hydroxytabersonine, but has no activity with naringenin, tryptamine, secologanin, strictosidine, ajmalicine, vindoline and catharanthine (PubMed:24108213).</text>
</comment>
<comment type="catalytic activity">
    <reaction evidence="4 7">
        <text>(-)-tabersonine + reduced [NADPH--hemoprotein reductase] + O2 = 16-hydroxytabersonine + oxidized [NADPH--hemoprotein reductase] + H2O + H(+)</text>
        <dbReference type="Rhea" id="RHEA:14133"/>
        <dbReference type="Rhea" id="RHEA-COMP:11964"/>
        <dbReference type="Rhea" id="RHEA-COMP:11965"/>
        <dbReference type="ChEBI" id="CHEBI:15377"/>
        <dbReference type="ChEBI" id="CHEBI:15378"/>
        <dbReference type="ChEBI" id="CHEBI:15379"/>
        <dbReference type="ChEBI" id="CHEBI:57618"/>
        <dbReference type="ChEBI" id="CHEBI:57893"/>
        <dbReference type="ChEBI" id="CHEBI:58210"/>
        <dbReference type="ChEBI" id="CHEBI:58239"/>
        <dbReference type="EC" id="1.14.14.103"/>
    </reaction>
</comment>
<comment type="cofactor">
    <cofactor evidence="1">
        <name>heme</name>
        <dbReference type="ChEBI" id="CHEBI:30413"/>
    </cofactor>
</comment>
<comment type="biophysicochemical properties">
    <kinetics>
        <KM evidence="4">11 uM for tabersonine in a T16H/16OMT coupled system</KM>
        <KM evidence="7">350 nM for tabersonine</KM>
        <KM evidence="4">14 uM for NADPH in a T16H/16OMT coupled system</KM>
        <text evidence="4">concentrations of tabersonine greater than 30 uM are inhibitory.</text>
    </kinetics>
    <phDependence>
        <text evidence="4">Optimum pH is 7.5 in phosphate buffer and 8.0 in TRIS-HCl.</text>
    </phDependence>
    <temperatureDependence>
        <text evidence="4">Stable at 30 degrees Celsius.</text>
    </temperatureDependence>
</comment>
<comment type="pathway">
    <text evidence="9">Alkaloid biosynthesis; vindoline biosynthesis.</text>
</comment>
<comment type="subcellular location">
    <subcellularLocation>
        <location evidence="4 6">Endoplasmic reticulum membrane</location>
        <topology evidence="2">Single-pass membrane protein</topology>
    </subcellularLocation>
    <text evidence="6">The ER localization is dependent on the presence of the putative transmembrane helix.</text>
</comment>
<comment type="tissue specificity">
    <text evidence="4 5 7">Predominantly expressed in young leaves of mature plants (PubMed:12228585, PubMed:16262708). Low expression in roots and flowers, but not detected in stems and old leaves (PubMed:12228585, PubMed:16262708). Found predominantly in leaf epidermis (PubMed:12228585, PubMed:16262708). Barely detected in roots, internodes, young and mature leaves, and flower buds, but relatively abundant in fully developed flowers (PubMed:24108213). Not detected in leaf epidermal cells (PubMed:24108213).</text>
</comment>
<comment type="developmental stage">
    <text evidence="4">Peak of expression after light treatment at 9 days of seedling development.</text>
</comment>
<comment type="induction">
    <text evidence="4 7">Up-regulated by methyl jasmonate (PubMed:24108213). Inhibited by cytochrome c, CO, clotrimazole, miconazole, tricliphane, flusilazole and tetcyclasis, and with a lower efficiency, by 1-phenylimidazole and piperonylbutoxide. Not inhibited by potassium cyanide and sodium azide.</text>
</comment>
<comment type="miscellaneous">
    <text evidence="7">Tabersonine 16-hydroxylation is orchestrated in an organ-dependent manner by two genes including CYP71D351, which encodes the T16H2 isoform acting in the foliar vindoline biosynthesis, and CYP71D12, which encodes the T16H1 isoform acting in the flower vindoline biosynthesis.</text>
</comment>
<comment type="similarity">
    <text evidence="9">Belongs to the cytochrome P450 family.</text>
</comment>
<protein>
    <recommendedName>
        <fullName evidence="8">Tabersonine 16-hydroxylase 1</fullName>
        <ecNumber evidence="4 7">1.14.14.103</ecNumber>
    </recommendedName>
    <alternativeName>
        <fullName evidence="8">Cytochrome P450 71D12</fullName>
    </alternativeName>
</protein>
<name>C71DC_CATRO</name>
<keyword id="KW-0017">Alkaloid metabolism</keyword>
<keyword id="KW-0256">Endoplasmic reticulum</keyword>
<keyword id="KW-0349">Heme</keyword>
<keyword id="KW-0408">Iron</keyword>
<keyword id="KW-0472">Membrane</keyword>
<keyword id="KW-0479">Metal-binding</keyword>
<keyword id="KW-0503">Monooxygenase</keyword>
<keyword id="KW-0560">Oxidoreductase</keyword>
<keyword id="KW-0812">Transmembrane</keyword>
<keyword id="KW-1133">Transmembrane helix</keyword>
<evidence type="ECO:0000250" key="1">
    <source>
        <dbReference type="UniProtKB" id="Q96242"/>
    </source>
</evidence>
<evidence type="ECO:0000255" key="2"/>
<evidence type="ECO:0000269" key="3">
    <source>
    </source>
</evidence>
<evidence type="ECO:0000269" key="4">
    <source>
    </source>
</evidence>
<evidence type="ECO:0000269" key="5">
    <source>
    </source>
</evidence>
<evidence type="ECO:0000269" key="6">
    <source>
    </source>
</evidence>
<evidence type="ECO:0000269" key="7">
    <source>
    </source>
</evidence>
<evidence type="ECO:0000303" key="8">
    <source>
    </source>
</evidence>
<evidence type="ECO:0000305" key="9"/>
<organism>
    <name type="scientific">Catharanthus roseus</name>
    <name type="common">Madagascar periwinkle</name>
    <name type="synonym">Vinca rosea</name>
    <dbReference type="NCBI Taxonomy" id="4058"/>
    <lineage>
        <taxon>Eukaryota</taxon>
        <taxon>Viridiplantae</taxon>
        <taxon>Streptophyta</taxon>
        <taxon>Embryophyta</taxon>
        <taxon>Tracheophyta</taxon>
        <taxon>Spermatophyta</taxon>
        <taxon>Magnoliopsida</taxon>
        <taxon>eudicotyledons</taxon>
        <taxon>Gunneridae</taxon>
        <taxon>Pentapetalae</taxon>
        <taxon>asterids</taxon>
        <taxon>lamiids</taxon>
        <taxon>Gentianales</taxon>
        <taxon>Apocynaceae</taxon>
        <taxon>Rauvolfioideae</taxon>
        <taxon>Vinceae</taxon>
        <taxon>Catharanthinae</taxon>
        <taxon>Catharanthus</taxon>
    </lineage>
</organism>
<sequence length="506" mass="58079">MEFYYFLYLAFLLFCFILSKTTKKFGQNSQYSNHDELPPGPPQIPILGNAHQLSGGHTHHILRDLAKKYGPLMHLKIGEVSTIVASSPQIAEEIFRTHDILFADRPSNLESFKIVSYDFSDMVVSPYGNYWRQLRKISMMELLSQKSVQSFRSIREEEVLNFIKSIGSKEGTRINLSKEISLLIYGITTRAAFGEKNKNTEEFIRLLDQLTKAVAEPNIADMFPSLKFLQLISTSKYKIEKIHKQFDVIVETILKGHKEKINKPLSQENGEKKEDLVDVLLNIQRRNDFEAPLGDKNIKAIIFNIFSAGTETSSTTVDWAMCEMIKNPTVMKKAQEEVRKVFNEEGNVDETKLHQLKYLQAVIKETLRLHPPVPLLLPRECREQCKIKGYTIPSKSRVIVNAWAIGRDPNYWIEPEKFNPDRFLESKVDFKGNSFEYLPFGGGRRICPGITFALANIELPLAQLLFHFDWQSNTEKLNMKESRGVTVRREDDLYLTPVNFSSSSPA</sequence>
<proteinExistence type="evidence at protein level"/>